<reference key="1">
    <citation type="journal article" date="2010" name="PLoS ONE">
        <title>Genome sequence of Cronobacter sakazakii BAA-894 and comparative genomic hybridization analysis with other Cronobacter species.</title>
        <authorList>
            <person name="Kucerova E."/>
            <person name="Clifton S.W."/>
            <person name="Xia X.Q."/>
            <person name="Long F."/>
            <person name="Porwollik S."/>
            <person name="Fulton L."/>
            <person name="Fronick C."/>
            <person name="Minx P."/>
            <person name="Kyung K."/>
            <person name="Warren W."/>
            <person name="Fulton R."/>
            <person name="Feng D."/>
            <person name="Wollam A."/>
            <person name="Shah N."/>
            <person name="Bhonagiri V."/>
            <person name="Nash W.E."/>
            <person name="Hallsworth-Pepin K."/>
            <person name="Wilson R.K."/>
            <person name="McClelland M."/>
            <person name="Forsythe S.J."/>
        </authorList>
    </citation>
    <scope>NUCLEOTIDE SEQUENCE [LARGE SCALE GENOMIC DNA]</scope>
    <source>
        <strain>ATCC BAA-894</strain>
    </source>
</reference>
<evidence type="ECO:0000255" key="1">
    <source>
        <dbReference type="HAMAP-Rule" id="MF_00063"/>
    </source>
</evidence>
<name>CYSH_CROS8</name>
<sequence length="244" mass="27788">MSVLDLHALNALEKDARAGALADTNAQLEALSAEARVSWALENLPGEFVLSSSFGIQAAVCLHLVTQQRPDIPVILTDTGYLFPETYRFIDELTEKLNLNLKIYRAEQSPAWQEARYGKLWEQGVEGIEKYNDINKVEPMNRALKELNAQTWFAGLRRDQSGSRANLPVLGVQRGVFKILPIIDWDNRTVYQYLQKHGLKYHPLWDEGYLSVGDTHTTRKWEPGMAEEETRFFGLKRECGLHEG</sequence>
<proteinExistence type="inferred from homology"/>
<comment type="function">
    <text evidence="1">Catalyzes the formation of sulfite from phosphoadenosine 5'-phosphosulfate (PAPS) using thioredoxin as an electron donor.</text>
</comment>
<comment type="catalytic activity">
    <reaction evidence="1">
        <text>[thioredoxin]-disulfide + sulfite + adenosine 3',5'-bisphosphate + 2 H(+) = [thioredoxin]-dithiol + 3'-phosphoadenylyl sulfate</text>
        <dbReference type="Rhea" id="RHEA:11724"/>
        <dbReference type="Rhea" id="RHEA-COMP:10698"/>
        <dbReference type="Rhea" id="RHEA-COMP:10700"/>
        <dbReference type="ChEBI" id="CHEBI:15378"/>
        <dbReference type="ChEBI" id="CHEBI:17359"/>
        <dbReference type="ChEBI" id="CHEBI:29950"/>
        <dbReference type="ChEBI" id="CHEBI:50058"/>
        <dbReference type="ChEBI" id="CHEBI:58339"/>
        <dbReference type="ChEBI" id="CHEBI:58343"/>
        <dbReference type="EC" id="1.8.4.8"/>
    </reaction>
</comment>
<comment type="pathway">
    <text evidence="1">Sulfur metabolism; hydrogen sulfide biosynthesis; sulfite from sulfate: step 3/3.</text>
</comment>
<comment type="subcellular location">
    <subcellularLocation>
        <location evidence="1">Cytoplasm</location>
    </subcellularLocation>
</comment>
<comment type="similarity">
    <text evidence="1">Belongs to the PAPS reductase family. CysH subfamily.</text>
</comment>
<dbReference type="EC" id="1.8.4.8" evidence="1"/>
<dbReference type="EMBL" id="CP000783">
    <property type="protein sequence ID" value="ABU75827.1"/>
    <property type="molecule type" value="Genomic_DNA"/>
</dbReference>
<dbReference type="RefSeq" id="WP_004387915.1">
    <property type="nucleotide sequence ID" value="NC_009778.1"/>
</dbReference>
<dbReference type="SMR" id="A7MJ65"/>
<dbReference type="GeneID" id="56729436"/>
<dbReference type="KEGG" id="esa:ESA_00536"/>
<dbReference type="HOGENOM" id="CLU_044089_3_0_6"/>
<dbReference type="UniPathway" id="UPA00140">
    <property type="reaction ID" value="UER00206"/>
</dbReference>
<dbReference type="Proteomes" id="UP000000260">
    <property type="component" value="Chromosome"/>
</dbReference>
<dbReference type="GO" id="GO:0005737">
    <property type="term" value="C:cytoplasm"/>
    <property type="evidence" value="ECO:0007669"/>
    <property type="project" value="UniProtKB-SubCell"/>
</dbReference>
<dbReference type="GO" id="GO:0004604">
    <property type="term" value="F:phosphoadenylyl-sulfate reductase (thioredoxin) activity"/>
    <property type="evidence" value="ECO:0007669"/>
    <property type="project" value="UniProtKB-UniRule"/>
</dbReference>
<dbReference type="GO" id="GO:0070814">
    <property type="term" value="P:hydrogen sulfide biosynthetic process"/>
    <property type="evidence" value="ECO:0007669"/>
    <property type="project" value="UniProtKB-UniRule"/>
</dbReference>
<dbReference type="GO" id="GO:0019379">
    <property type="term" value="P:sulfate assimilation, phosphoadenylyl sulfate reduction by phosphoadenylyl-sulfate reductase (thioredoxin)"/>
    <property type="evidence" value="ECO:0007669"/>
    <property type="project" value="UniProtKB-UniRule"/>
</dbReference>
<dbReference type="CDD" id="cd23945">
    <property type="entry name" value="PAPS_reductase"/>
    <property type="match status" value="1"/>
</dbReference>
<dbReference type="FunFam" id="3.40.50.620:FF:000043">
    <property type="entry name" value="Phosphoadenosine phosphosulfate reductase"/>
    <property type="match status" value="1"/>
</dbReference>
<dbReference type="Gene3D" id="3.40.50.620">
    <property type="entry name" value="HUPs"/>
    <property type="match status" value="1"/>
</dbReference>
<dbReference type="HAMAP" id="MF_00063">
    <property type="entry name" value="CysH"/>
    <property type="match status" value="1"/>
</dbReference>
<dbReference type="InterPro" id="IPR004511">
    <property type="entry name" value="PAPS/APS_Rdtase"/>
</dbReference>
<dbReference type="InterPro" id="IPR002500">
    <property type="entry name" value="PAPS_reduct_dom"/>
</dbReference>
<dbReference type="InterPro" id="IPR011800">
    <property type="entry name" value="PAPS_reductase_CysH"/>
</dbReference>
<dbReference type="InterPro" id="IPR014729">
    <property type="entry name" value="Rossmann-like_a/b/a_fold"/>
</dbReference>
<dbReference type="NCBIfam" id="TIGR00434">
    <property type="entry name" value="cysH"/>
    <property type="match status" value="1"/>
</dbReference>
<dbReference type="NCBIfam" id="TIGR02057">
    <property type="entry name" value="PAPS_reductase"/>
    <property type="match status" value="1"/>
</dbReference>
<dbReference type="NCBIfam" id="NF002537">
    <property type="entry name" value="PRK02090.1"/>
    <property type="match status" value="1"/>
</dbReference>
<dbReference type="PANTHER" id="PTHR46509">
    <property type="entry name" value="PHOSPHOADENOSINE PHOSPHOSULFATE REDUCTASE"/>
    <property type="match status" value="1"/>
</dbReference>
<dbReference type="PANTHER" id="PTHR46509:SF1">
    <property type="entry name" value="PHOSPHOADENOSINE PHOSPHOSULFATE REDUCTASE"/>
    <property type="match status" value="1"/>
</dbReference>
<dbReference type="Pfam" id="PF01507">
    <property type="entry name" value="PAPS_reduct"/>
    <property type="match status" value="1"/>
</dbReference>
<dbReference type="PIRSF" id="PIRSF000857">
    <property type="entry name" value="PAPS_reductase"/>
    <property type="match status" value="1"/>
</dbReference>
<dbReference type="SUPFAM" id="SSF52402">
    <property type="entry name" value="Adenine nucleotide alpha hydrolases-like"/>
    <property type="match status" value="1"/>
</dbReference>
<feature type="chain" id="PRO_1000008924" description="Phosphoadenosine 5'-phosphosulfate reductase">
    <location>
        <begin position="1"/>
        <end position="244"/>
    </location>
</feature>
<feature type="active site" description="Nucleophile; cysteine thiosulfonate intermediate" evidence="1">
    <location>
        <position position="239"/>
    </location>
</feature>
<gene>
    <name evidence="1" type="primary">cysH</name>
    <name type="ordered locus">ESA_00536</name>
</gene>
<protein>
    <recommendedName>
        <fullName evidence="1">Phosphoadenosine 5'-phosphosulfate reductase</fullName>
        <shortName evidence="1">PAPS reductase</shortName>
        <ecNumber evidence="1">1.8.4.8</ecNumber>
    </recommendedName>
    <alternativeName>
        <fullName evidence="1">3'-phosphoadenylylsulfate reductase</fullName>
    </alternativeName>
    <alternativeName>
        <fullName evidence="1">PAPS reductase, thioredoxin dependent</fullName>
    </alternativeName>
    <alternativeName>
        <fullName evidence="1">PAPS sulfotransferase</fullName>
    </alternativeName>
    <alternativeName>
        <fullName evidence="1">PAdoPS reductase</fullName>
    </alternativeName>
</protein>
<accession>A7MJ65</accession>
<organism>
    <name type="scientific">Cronobacter sakazakii (strain ATCC BAA-894)</name>
    <name type="common">Enterobacter sakazakii</name>
    <dbReference type="NCBI Taxonomy" id="290339"/>
    <lineage>
        <taxon>Bacteria</taxon>
        <taxon>Pseudomonadati</taxon>
        <taxon>Pseudomonadota</taxon>
        <taxon>Gammaproteobacteria</taxon>
        <taxon>Enterobacterales</taxon>
        <taxon>Enterobacteriaceae</taxon>
        <taxon>Cronobacter</taxon>
    </lineage>
</organism>
<keyword id="KW-0963">Cytoplasm</keyword>
<keyword id="KW-0560">Oxidoreductase</keyword>
<keyword id="KW-1185">Reference proteome</keyword>